<sequence length="352" mass="38655">MRVDLFDFDLPDENIALRPANPRDQARFLIVRPDGSLMLEDRRVFELPSFLRAGDALVFNDTKVIPAQLEGVRIREGAERTPVSCTLHMRVAANRWKAFARPGKRIKQGDVIDFDGLSANVAEKGEAGEIDLEFAASGPDLDRAIAGVGHIPLPPYIAAKRPEDSQDRTDYQTIYAREEGAVAAPTAGLHFTPALFEALDKAGIERHFVTLHVGAGTFLPVKADDTDDHKMHQEIGHVSAETAEALNAVKARGGRIVSVGTTSLRLLESAASEDGRLLPWSDATGIFITPGYRFKAVDVLMTNFHLPKSTLFMLVSAFAGLETMRAAYAHAIETGYRFYSYGDSSLLFRKDK</sequence>
<feature type="chain" id="PRO_1000119137" description="S-adenosylmethionine:tRNA ribosyltransferase-isomerase">
    <location>
        <begin position="1"/>
        <end position="352"/>
    </location>
</feature>
<gene>
    <name evidence="1" type="primary">queA</name>
    <name type="ordered locus">Avi_2450</name>
</gene>
<accession>B9JWX0</accession>
<organism>
    <name type="scientific">Allorhizobium ampelinum (strain ATCC BAA-846 / DSM 112012 / S4)</name>
    <name type="common">Agrobacterium vitis (strain S4)</name>
    <dbReference type="NCBI Taxonomy" id="311402"/>
    <lineage>
        <taxon>Bacteria</taxon>
        <taxon>Pseudomonadati</taxon>
        <taxon>Pseudomonadota</taxon>
        <taxon>Alphaproteobacteria</taxon>
        <taxon>Hyphomicrobiales</taxon>
        <taxon>Rhizobiaceae</taxon>
        <taxon>Rhizobium/Agrobacterium group</taxon>
        <taxon>Allorhizobium</taxon>
        <taxon>Allorhizobium ampelinum</taxon>
    </lineage>
</organism>
<keyword id="KW-0963">Cytoplasm</keyword>
<keyword id="KW-0671">Queuosine biosynthesis</keyword>
<keyword id="KW-1185">Reference proteome</keyword>
<keyword id="KW-0949">S-adenosyl-L-methionine</keyword>
<keyword id="KW-0808">Transferase</keyword>
<name>QUEA_ALLAM</name>
<reference key="1">
    <citation type="journal article" date="2009" name="J. Bacteriol.">
        <title>Genome sequences of three Agrobacterium biovars help elucidate the evolution of multichromosome genomes in bacteria.</title>
        <authorList>
            <person name="Slater S.C."/>
            <person name="Goldman B.S."/>
            <person name="Goodner B."/>
            <person name="Setubal J.C."/>
            <person name="Farrand S.K."/>
            <person name="Nester E.W."/>
            <person name="Burr T.J."/>
            <person name="Banta L."/>
            <person name="Dickerman A.W."/>
            <person name="Paulsen I."/>
            <person name="Otten L."/>
            <person name="Suen G."/>
            <person name="Welch R."/>
            <person name="Almeida N.F."/>
            <person name="Arnold F."/>
            <person name="Burton O.T."/>
            <person name="Du Z."/>
            <person name="Ewing A."/>
            <person name="Godsy E."/>
            <person name="Heisel S."/>
            <person name="Houmiel K.L."/>
            <person name="Jhaveri J."/>
            <person name="Lu J."/>
            <person name="Miller N.M."/>
            <person name="Norton S."/>
            <person name="Chen Q."/>
            <person name="Phoolcharoen W."/>
            <person name="Ohlin V."/>
            <person name="Ondrusek D."/>
            <person name="Pride N."/>
            <person name="Stricklin S.L."/>
            <person name="Sun J."/>
            <person name="Wheeler C."/>
            <person name="Wilson L."/>
            <person name="Zhu H."/>
            <person name="Wood D.W."/>
        </authorList>
    </citation>
    <scope>NUCLEOTIDE SEQUENCE [LARGE SCALE GENOMIC DNA]</scope>
    <source>
        <strain>ATCC BAA-846 / DSM 112012 / S4</strain>
    </source>
</reference>
<comment type="function">
    <text evidence="1">Transfers and isomerizes the ribose moiety from AdoMet to the 7-aminomethyl group of 7-deazaguanine (preQ1-tRNA) to give epoxyqueuosine (oQ-tRNA).</text>
</comment>
<comment type="catalytic activity">
    <reaction evidence="1">
        <text>7-aminomethyl-7-carbaguanosine(34) in tRNA + S-adenosyl-L-methionine = epoxyqueuosine(34) in tRNA + adenine + L-methionine + 2 H(+)</text>
        <dbReference type="Rhea" id="RHEA:32155"/>
        <dbReference type="Rhea" id="RHEA-COMP:10342"/>
        <dbReference type="Rhea" id="RHEA-COMP:18582"/>
        <dbReference type="ChEBI" id="CHEBI:15378"/>
        <dbReference type="ChEBI" id="CHEBI:16708"/>
        <dbReference type="ChEBI" id="CHEBI:57844"/>
        <dbReference type="ChEBI" id="CHEBI:59789"/>
        <dbReference type="ChEBI" id="CHEBI:82833"/>
        <dbReference type="ChEBI" id="CHEBI:194443"/>
        <dbReference type="EC" id="2.4.99.17"/>
    </reaction>
</comment>
<comment type="pathway">
    <text evidence="1">tRNA modification; tRNA-queuosine biosynthesis.</text>
</comment>
<comment type="subunit">
    <text evidence="1">Monomer.</text>
</comment>
<comment type="subcellular location">
    <subcellularLocation>
        <location evidence="1">Cytoplasm</location>
    </subcellularLocation>
</comment>
<comment type="similarity">
    <text evidence="1">Belongs to the QueA family.</text>
</comment>
<evidence type="ECO:0000255" key="1">
    <source>
        <dbReference type="HAMAP-Rule" id="MF_00113"/>
    </source>
</evidence>
<protein>
    <recommendedName>
        <fullName evidence="1">S-adenosylmethionine:tRNA ribosyltransferase-isomerase</fullName>
        <ecNumber evidence="1">2.4.99.17</ecNumber>
    </recommendedName>
    <alternativeName>
        <fullName evidence="1">Queuosine biosynthesis protein QueA</fullName>
    </alternativeName>
</protein>
<dbReference type="EC" id="2.4.99.17" evidence="1"/>
<dbReference type="EMBL" id="CP000633">
    <property type="protein sequence ID" value="ACM36748.1"/>
    <property type="molecule type" value="Genomic_DNA"/>
</dbReference>
<dbReference type="RefSeq" id="WP_015916169.1">
    <property type="nucleotide sequence ID" value="NC_011989.1"/>
</dbReference>
<dbReference type="SMR" id="B9JWX0"/>
<dbReference type="STRING" id="311402.Avi_2450"/>
<dbReference type="KEGG" id="avi:Avi_2450"/>
<dbReference type="eggNOG" id="COG0809">
    <property type="taxonomic scope" value="Bacteria"/>
</dbReference>
<dbReference type="HOGENOM" id="CLU_039110_1_1_5"/>
<dbReference type="UniPathway" id="UPA00392"/>
<dbReference type="Proteomes" id="UP000001596">
    <property type="component" value="Chromosome 1"/>
</dbReference>
<dbReference type="GO" id="GO:0005737">
    <property type="term" value="C:cytoplasm"/>
    <property type="evidence" value="ECO:0007669"/>
    <property type="project" value="UniProtKB-SubCell"/>
</dbReference>
<dbReference type="GO" id="GO:0051075">
    <property type="term" value="F:S-adenosylmethionine:tRNA ribosyltransferase-isomerase activity"/>
    <property type="evidence" value="ECO:0007669"/>
    <property type="project" value="UniProtKB-EC"/>
</dbReference>
<dbReference type="GO" id="GO:0008616">
    <property type="term" value="P:queuosine biosynthetic process"/>
    <property type="evidence" value="ECO:0007669"/>
    <property type="project" value="UniProtKB-UniRule"/>
</dbReference>
<dbReference type="GO" id="GO:0002099">
    <property type="term" value="P:tRNA wobble guanine modification"/>
    <property type="evidence" value="ECO:0007669"/>
    <property type="project" value="TreeGrafter"/>
</dbReference>
<dbReference type="FunFam" id="3.40.1780.10:FF:000001">
    <property type="entry name" value="S-adenosylmethionine:tRNA ribosyltransferase-isomerase"/>
    <property type="match status" value="1"/>
</dbReference>
<dbReference type="Gene3D" id="2.40.10.240">
    <property type="entry name" value="QueA-like"/>
    <property type="match status" value="1"/>
</dbReference>
<dbReference type="Gene3D" id="3.40.1780.10">
    <property type="entry name" value="QueA-like"/>
    <property type="match status" value="1"/>
</dbReference>
<dbReference type="HAMAP" id="MF_00113">
    <property type="entry name" value="QueA"/>
    <property type="match status" value="1"/>
</dbReference>
<dbReference type="InterPro" id="IPR003699">
    <property type="entry name" value="QueA"/>
</dbReference>
<dbReference type="InterPro" id="IPR042118">
    <property type="entry name" value="QueA_dom1"/>
</dbReference>
<dbReference type="InterPro" id="IPR042119">
    <property type="entry name" value="QueA_dom2"/>
</dbReference>
<dbReference type="InterPro" id="IPR036100">
    <property type="entry name" value="QueA_sf"/>
</dbReference>
<dbReference type="NCBIfam" id="NF001140">
    <property type="entry name" value="PRK00147.1"/>
    <property type="match status" value="1"/>
</dbReference>
<dbReference type="NCBIfam" id="TIGR00113">
    <property type="entry name" value="queA"/>
    <property type="match status" value="1"/>
</dbReference>
<dbReference type="PANTHER" id="PTHR30307">
    <property type="entry name" value="S-ADENOSYLMETHIONINE:TRNA RIBOSYLTRANSFERASE-ISOMERASE"/>
    <property type="match status" value="1"/>
</dbReference>
<dbReference type="PANTHER" id="PTHR30307:SF0">
    <property type="entry name" value="S-ADENOSYLMETHIONINE:TRNA RIBOSYLTRANSFERASE-ISOMERASE"/>
    <property type="match status" value="1"/>
</dbReference>
<dbReference type="Pfam" id="PF02547">
    <property type="entry name" value="Queuosine_synth"/>
    <property type="match status" value="1"/>
</dbReference>
<dbReference type="SUPFAM" id="SSF111337">
    <property type="entry name" value="QueA-like"/>
    <property type="match status" value="1"/>
</dbReference>
<proteinExistence type="inferred from homology"/>